<gene>
    <name evidence="1" type="primary">darP</name>
    <name type="ordered locus">CKO_03595</name>
</gene>
<sequence>MTKQPEDWLDDVPGDDIEDEDDEIIWVSKSEIKRDAEELKRLGAEIVDLGKNALDKIPLDADLRAAIELAQRIKMEGRRRQLQLIGKMLRQRDVEPIRQALDKLKNRHNQQVVLFHKLEQLRDRLIVEGDDAVEEVLSLWPNADRQQLRSLIRNAKKEKEGNKPPKSARQIFQYLRELAENEE</sequence>
<keyword id="KW-0963">Cytoplasm</keyword>
<keyword id="KW-1185">Reference proteome</keyword>
<keyword id="KW-0690">Ribosome biogenesis</keyword>
<keyword id="KW-0694">RNA-binding</keyword>
<keyword id="KW-0699">rRNA-binding</keyword>
<organism>
    <name type="scientific">Citrobacter koseri (strain ATCC BAA-895 / CDC 4225-83 / SGSC4696)</name>
    <dbReference type="NCBI Taxonomy" id="290338"/>
    <lineage>
        <taxon>Bacteria</taxon>
        <taxon>Pseudomonadati</taxon>
        <taxon>Pseudomonadota</taxon>
        <taxon>Gammaproteobacteria</taxon>
        <taxon>Enterobacterales</taxon>
        <taxon>Enterobacteriaceae</taxon>
        <taxon>Citrobacter</taxon>
    </lineage>
</organism>
<name>DARP_CITK8</name>
<accession>A8AMG1</accession>
<feature type="chain" id="PRO_1000046795" description="Dual-action ribosomal maturation protein DarP">
    <location>
        <begin position="1"/>
        <end position="183"/>
    </location>
</feature>
<reference key="1">
    <citation type="submission" date="2007-08" db="EMBL/GenBank/DDBJ databases">
        <authorList>
            <consortium name="The Citrobacter koseri Genome Sequencing Project"/>
            <person name="McClelland M."/>
            <person name="Sanderson E.K."/>
            <person name="Porwollik S."/>
            <person name="Spieth J."/>
            <person name="Clifton W.S."/>
            <person name="Latreille P."/>
            <person name="Courtney L."/>
            <person name="Wang C."/>
            <person name="Pepin K."/>
            <person name="Bhonagiri V."/>
            <person name="Nash W."/>
            <person name="Johnson M."/>
            <person name="Thiruvilangam P."/>
            <person name="Wilson R."/>
        </authorList>
    </citation>
    <scope>NUCLEOTIDE SEQUENCE [LARGE SCALE GENOMIC DNA]</scope>
    <source>
        <strain>ATCC BAA-895 / CDC 4225-83 / SGSC4696</strain>
    </source>
</reference>
<dbReference type="EMBL" id="CP000822">
    <property type="protein sequence ID" value="ABV14674.1"/>
    <property type="molecule type" value="Genomic_DNA"/>
</dbReference>
<dbReference type="SMR" id="A8AMG1"/>
<dbReference type="STRING" id="290338.CKO_03595"/>
<dbReference type="GeneID" id="45137312"/>
<dbReference type="KEGG" id="cko:CKO_03595"/>
<dbReference type="HOGENOM" id="CLU_106757_2_0_6"/>
<dbReference type="OrthoDB" id="5293604at2"/>
<dbReference type="Proteomes" id="UP000008148">
    <property type="component" value="Chromosome"/>
</dbReference>
<dbReference type="GO" id="GO:0005829">
    <property type="term" value="C:cytosol"/>
    <property type="evidence" value="ECO:0007669"/>
    <property type="project" value="TreeGrafter"/>
</dbReference>
<dbReference type="GO" id="GO:0043022">
    <property type="term" value="F:ribosome binding"/>
    <property type="evidence" value="ECO:0007669"/>
    <property type="project" value="UniProtKB-UniRule"/>
</dbReference>
<dbReference type="GO" id="GO:0019843">
    <property type="term" value="F:rRNA binding"/>
    <property type="evidence" value="ECO:0007669"/>
    <property type="project" value="UniProtKB-UniRule"/>
</dbReference>
<dbReference type="GO" id="GO:1902626">
    <property type="term" value="P:assembly of large subunit precursor of preribosome"/>
    <property type="evidence" value="ECO:0007669"/>
    <property type="project" value="UniProtKB-UniRule"/>
</dbReference>
<dbReference type="CDD" id="cd16331">
    <property type="entry name" value="YjgA-like"/>
    <property type="match status" value="1"/>
</dbReference>
<dbReference type="FunFam" id="1.10.60.30:FF:000001">
    <property type="entry name" value="UPF0307 protein YjgA"/>
    <property type="match status" value="1"/>
</dbReference>
<dbReference type="FunFam" id="1.10.60.30:FF:000002">
    <property type="entry name" value="UPF0307 protein YjgA"/>
    <property type="match status" value="1"/>
</dbReference>
<dbReference type="Gene3D" id="1.10.60.30">
    <property type="entry name" value="PSPTO4464-like domains"/>
    <property type="match status" value="2"/>
</dbReference>
<dbReference type="HAMAP" id="MF_00765">
    <property type="entry name" value="DarP"/>
    <property type="match status" value="1"/>
</dbReference>
<dbReference type="InterPro" id="IPR006839">
    <property type="entry name" value="DarP"/>
</dbReference>
<dbReference type="InterPro" id="IPR023153">
    <property type="entry name" value="DarP_sf"/>
</dbReference>
<dbReference type="NCBIfam" id="NF003593">
    <property type="entry name" value="PRK05255.1-1"/>
    <property type="match status" value="1"/>
</dbReference>
<dbReference type="PANTHER" id="PTHR38101">
    <property type="entry name" value="UPF0307 PROTEIN YJGA"/>
    <property type="match status" value="1"/>
</dbReference>
<dbReference type="PANTHER" id="PTHR38101:SF1">
    <property type="entry name" value="UPF0307 PROTEIN YJGA"/>
    <property type="match status" value="1"/>
</dbReference>
<dbReference type="Pfam" id="PF04751">
    <property type="entry name" value="DarP"/>
    <property type="match status" value="1"/>
</dbReference>
<dbReference type="PIRSF" id="PIRSF016183">
    <property type="entry name" value="UCP016183"/>
    <property type="match status" value="1"/>
</dbReference>
<dbReference type="SUPFAM" id="SSF158710">
    <property type="entry name" value="PSPTO4464-like"/>
    <property type="match status" value="1"/>
</dbReference>
<protein>
    <recommendedName>
        <fullName evidence="1">Dual-action ribosomal maturation protein DarP</fullName>
    </recommendedName>
    <alternativeName>
        <fullName evidence="1">Large ribosomal subunit assembly factor DarP</fullName>
    </alternativeName>
</protein>
<comment type="function">
    <text evidence="1">Member of a network of 50S ribosomal subunit biogenesis factors which assembles along the 30S-50S interface, preventing incorrect 23S rRNA structures from forming. Promotes peptidyl transferase center (PTC) maturation.</text>
</comment>
<comment type="subcellular location">
    <subcellularLocation>
        <location evidence="1">Cytoplasm</location>
    </subcellularLocation>
    <text evidence="1">Associates with late stage pre-50S ribosomal subunits.</text>
</comment>
<comment type="similarity">
    <text evidence="1">Belongs to the DarP family.</text>
</comment>
<proteinExistence type="inferred from homology"/>
<evidence type="ECO:0000255" key="1">
    <source>
        <dbReference type="HAMAP-Rule" id="MF_00765"/>
    </source>
</evidence>